<keyword id="KW-0010">Activator</keyword>
<keyword id="KW-0156">Chromatin regulator</keyword>
<keyword id="KW-0963">Cytoplasm</keyword>
<keyword id="KW-0479">Metal-binding</keyword>
<keyword id="KW-0509">mRNA transport</keyword>
<keyword id="KW-0539">Nucleus</keyword>
<keyword id="KW-0653">Protein transport</keyword>
<keyword id="KW-1185">Reference proteome</keyword>
<keyword id="KW-0804">Transcription</keyword>
<keyword id="KW-0805">Transcription regulation</keyword>
<keyword id="KW-0811">Translocation</keyword>
<keyword id="KW-0813">Transport</keyword>
<keyword id="KW-0862">Zinc</keyword>
<keyword id="KW-0863">Zinc-finger</keyword>
<reference key="1">
    <citation type="journal article" date="2007" name="Nature">
        <title>Evolution of genes and genomes on the Drosophila phylogeny.</title>
        <authorList>
            <consortium name="Drosophila 12 genomes consortium"/>
        </authorList>
    </citation>
    <scope>NUCLEOTIDE SEQUENCE [LARGE SCALE GENOMIC DNA]</scope>
    <source>
        <strain>Tucson 14030-0811.24</strain>
    </source>
</reference>
<evidence type="ECO:0000255" key="1">
    <source>
        <dbReference type="HAMAP-Rule" id="MF_03047"/>
    </source>
</evidence>
<evidence type="ECO:0000256" key="2">
    <source>
        <dbReference type="SAM" id="MobiDB-lite"/>
    </source>
</evidence>
<protein>
    <recommendedName>
        <fullName evidence="1">SAGA-associated factor 11 homolog 1</fullName>
    </recommendedName>
</protein>
<sequence>MSRTIVVKNPRTSGKDEDKAQIPSQDELPSGSSGAKTTNQIISEFRALIKDPIKLDEAVNYLYETLVDDAAVGIFIETRQLQKTGSLTALEGTVEETNDMCDLPDCDIFGMSTAEKTAKCCCPNCERMVAAVRFAPHLQTCLGLGRSSSRAALRRLTVSSRSSSTSTGGGQANEKSTDDEDWSLDSRPGKSTKNSRNKGSKKNQKNKLK</sequence>
<organism>
    <name type="scientific">Drosophila willistoni</name>
    <name type="common">Fruit fly</name>
    <dbReference type="NCBI Taxonomy" id="7260"/>
    <lineage>
        <taxon>Eukaryota</taxon>
        <taxon>Metazoa</taxon>
        <taxon>Ecdysozoa</taxon>
        <taxon>Arthropoda</taxon>
        <taxon>Hexapoda</taxon>
        <taxon>Insecta</taxon>
        <taxon>Pterygota</taxon>
        <taxon>Neoptera</taxon>
        <taxon>Endopterygota</taxon>
        <taxon>Diptera</taxon>
        <taxon>Brachycera</taxon>
        <taxon>Muscomorpha</taxon>
        <taxon>Ephydroidea</taxon>
        <taxon>Drosophilidae</taxon>
        <taxon>Drosophila</taxon>
        <taxon>Sophophora</taxon>
    </lineage>
</organism>
<feature type="chain" id="PRO_0000367532" description="SAGA-associated factor 11 homolog 1">
    <location>
        <begin position="1"/>
        <end position="209"/>
    </location>
</feature>
<feature type="zinc finger region" description="SGF11-type" evidence="1">
    <location>
        <begin position="120"/>
        <end position="141"/>
    </location>
</feature>
<feature type="region of interest" description="Disordered" evidence="2">
    <location>
        <begin position="1"/>
        <end position="36"/>
    </location>
</feature>
<feature type="region of interest" description="Disordered" evidence="2">
    <location>
        <begin position="156"/>
        <end position="209"/>
    </location>
</feature>
<feature type="compositionally biased region" description="Low complexity" evidence="2">
    <location>
        <begin position="156"/>
        <end position="166"/>
    </location>
</feature>
<feature type="compositionally biased region" description="Basic residues" evidence="2">
    <location>
        <begin position="193"/>
        <end position="209"/>
    </location>
</feature>
<proteinExistence type="inferred from homology"/>
<gene>
    <name evidence="1" type="primary">Sgf11-1</name>
    <name type="ORF">GK15061</name>
</gene>
<dbReference type="EMBL" id="CH963857">
    <property type="protein sequence ID" value="EDW75696.1"/>
    <property type="molecule type" value="Genomic_DNA"/>
</dbReference>
<dbReference type="RefSeq" id="XP_002064710.2">
    <property type="nucleotide sequence ID" value="XM_002064674.2"/>
</dbReference>
<dbReference type="SMR" id="B4MVH6"/>
<dbReference type="STRING" id="7260.B4MVH6"/>
<dbReference type="EnsemblMetazoa" id="XM_023175658.2">
    <property type="protein sequence ID" value="XP_023031426.1"/>
    <property type="gene ID" value="LOC6642765"/>
</dbReference>
<dbReference type="eggNOG" id="KOG2612">
    <property type="taxonomic scope" value="Eukaryota"/>
</dbReference>
<dbReference type="HOGENOM" id="CLU_100743_0_0_1"/>
<dbReference type="OMA" id="NCNRNMA"/>
<dbReference type="OrthoDB" id="21557at2759"/>
<dbReference type="PhylomeDB" id="B4MVH6"/>
<dbReference type="Proteomes" id="UP000007798">
    <property type="component" value="Unassembled WGS sequence"/>
</dbReference>
<dbReference type="GO" id="GO:0005737">
    <property type="term" value="C:cytoplasm"/>
    <property type="evidence" value="ECO:0007669"/>
    <property type="project" value="UniProtKB-SubCell"/>
</dbReference>
<dbReference type="GO" id="GO:0071819">
    <property type="term" value="C:DUBm complex"/>
    <property type="evidence" value="ECO:0007669"/>
    <property type="project" value="UniProtKB-UniRule"/>
</dbReference>
<dbReference type="GO" id="GO:0005643">
    <property type="term" value="C:nuclear pore"/>
    <property type="evidence" value="ECO:0007669"/>
    <property type="project" value="UniProtKB-UniRule"/>
</dbReference>
<dbReference type="GO" id="GO:0005654">
    <property type="term" value="C:nucleoplasm"/>
    <property type="evidence" value="ECO:0007669"/>
    <property type="project" value="UniProtKB-SubCell"/>
</dbReference>
<dbReference type="GO" id="GO:0000124">
    <property type="term" value="C:SAGA complex"/>
    <property type="evidence" value="ECO:0000250"/>
    <property type="project" value="UniProtKB"/>
</dbReference>
<dbReference type="GO" id="GO:0003713">
    <property type="term" value="F:transcription coactivator activity"/>
    <property type="evidence" value="ECO:0007669"/>
    <property type="project" value="UniProtKB-UniRule"/>
</dbReference>
<dbReference type="GO" id="GO:0008270">
    <property type="term" value="F:zinc ion binding"/>
    <property type="evidence" value="ECO:0007669"/>
    <property type="project" value="UniProtKB-UniRule"/>
</dbReference>
<dbReference type="GO" id="GO:0006325">
    <property type="term" value="P:chromatin organization"/>
    <property type="evidence" value="ECO:0000250"/>
    <property type="project" value="UniProtKB"/>
</dbReference>
<dbReference type="GO" id="GO:0006406">
    <property type="term" value="P:mRNA export from nucleus"/>
    <property type="evidence" value="ECO:0007669"/>
    <property type="project" value="UniProtKB-UniRule"/>
</dbReference>
<dbReference type="GO" id="GO:0045893">
    <property type="term" value="P:positive regulation of DNA-templated transcription"/>
    <property type="evidence" value="ECO:0000250"/>
    <property type="project" value="UniProtKB"/>
</dbReference>
<dbReference type="GO" id="GO:0015031">
    <property type="term" value="P:protein transport"/>
    <property type="evidence" value="ECO:0007669"/>
    <property type="project" value="UniProtKB-KW"/>
</dbReference>
<dbReference type="GO" id="GO:0006357">
    <property type="term" value="P:regulation of transcription by RNA polymerase II"/>
    <property type="evidence" value="ECO:0007669"/>
    <property type="project" value="TreeGrafter"/>
</dbReference>
<dbReference type="Gene3D" id="3.30.160.60">
    <property type="entry name" value="Classic Zinc Finger"/>
    <property type="match status" value="1"/>
</dbReference>
<dbReference type="HAMAP" id="MF_03047">
    <property type="entry name" value="Sgf11"/>
    <property type="match status" value="1"/>
</dbReference>
<dbReference type="InterPro" id="IPR013246">
    <property type="entry name" value="SAGA_su_Sgf11"/>
</dbReference>
<dbReference type="InterPro" id="IPR051078">
    <property type="entry name" value="SGF11"/>
</dbReference>
<dbReference type="PANTHER" id="PTHR46367">
    <property type="entry name" value="ATAXIN-7-LIKE PROTEIN 3"/>
    <property type="match status" value="1"/>
</dbReference>
<dbReference type="PANTHER" id="PTHR46367:SF1">
    <property type="entry name" value="ATAXIN-7-LIKE PROTEIN 3"/>
    <property type="match status" value="1"/>
</dbReference>
<dbReference type="Pfam" id="PF08209">
    <property type="entry name" value="Sgf11"/>
    <property type="match status" value="1"/>
</dbReference>
<accession>B4MVH6</accession>
<comment type="function">
    <text evidence="1">Component of the transcription regulatory histone acetylation (HAT) complex SAGA, a multiprotein complex that activates transcription by remodeling chromatin and mediating histone acetylation and deubiquitination. Within the SAGA complex, participates in a subcomplex that specifically deubiquitinates histone H2B. The SAGA complex is recruited to specific gene promoters by activators, where it is required for transcription. Required for nuclear receptor-mediated transactivation. Binds independently on SAGA to promoters in an RNA-dependent manner. Binds to mRNA and is essential for total mRNA export from the nucleus. Required to counteract heterochromatin silencing. Controls the development of neuronal connectivity in visual system by being required for accurate axon targeting in the optic lobe. Required for expression of ecdysone-induced genes such as br/broad.</text>
</comment>
<comment type="subunit">
    <text evidence="1">Component of some SAGA transcription coactivator-HAT complexes, at least composed of Ada2b, not/nonstop, Pcaf/Gcn5, Sgf11 and Spt3. Within the SAGA complex, Sgf11, e(y)2, and not/nonstop form an additional subcomplex of SAGA called the DUB module (deubiquitination module). Interacts directly with not/nonstop. Interacts with the AMEX complex component xmas-2. Interacts with Cbp80; important for promoter recruitment of Sgf11 that is not associated with the DUB module.</text>
</comment>
<comment type="subcellular location">
    <subcellularLocation>
        <location evidence="1">Nucleus</location>
        <location evidence="1">Nucleoplasm</location>
    </subcellularLocation>
    <subcellularLocation>
        <location evidence="1">Cytoplasm</location>
    </subcellularLocation>
    <text evidence="1">Localizes to nuclear periphery, in contact with the nuclear pore complex (NPC).</text>
</comment>
<comment type="domain">
    <text evidence="1">The long N-terminal helix forms part of the 'assembly lobe' of the SAGA deubiquitination module.</text>
</comment>
<comment type="domain">
    <text evidence="1">The C-terminal SGF11-type zinc-finger domain together with the C-terminal catalytic domain of not/nonstop forms the 'catalytic lobe' of the SAGA deubiquitination module.</text>
</comment>
<comment type="similarity">
    <text evidence="1">Belongs to the SGF11 family.</text>
</comment>
<name>SG111_DROWI</name>